<name>NOP9_SORMK</name>
<evidence type="ECO:0000250" key="1"/>
<evidence type="ECO:0000256" key="2">
    <source>
        <dbReference type="SAM" id="MobiDB-lite"/>
    </source>
</evidence>
<evidence type="ECO:0000305" key="3"/>
<gene>
    <name type="primary">NOP9</name>
    <name type="ORF">SMAC_06402</name>
</gene>
<dbReference type="EMBL" id="CABT02000035">
    <property type="protein sequence ID" value="CCC13183.1"/>
    <property type="molecule type" value="Genomic_DNA"/>
</dbReference>
<dbReference type="RefSeq" id="XP_003344747.1">
    <property type="nucleotide sequence ID" value="XM_003344699.1"/>
</dbReference>
<dbReference type="SMR" id="D1ZSG5"/>
<dbReference type="FunCoup" id="D1ZSG5">
    <property type="interactions" value="858"/>
</dbReference>
<dbReference type="STRING" id="771870.D1ZSG5"/>
<dbReference type="VEuPathDB" id="FungiDB:SMAC_06402"/>
<dbReference type="eggNOG" id="KOG2188">
    <property type="taxonomic scope" value="Eukaryota"/>
</dbReference>
<dbReference type="HOGENOM" id="CLU_008720_1_0_1"/>
<dbReference type="InParanoid" id="D1ZSG5"/>
<dbReference type="OMA" id="HHLVRNF"/>
<dbReference type="OrthoDB" id="392571at2759"/>
<dbReference type="Proteomes" id="UP000001881">
    <property type="component" value="Unassembled WGS sequence"/>
</dbReference>
<dbReference type="GO" id="GO:0030686">
    <property type="term" value="C:90S preribosome"/>
    <property type="evidence" value="ECO:0007669"/>
    <property type="project" value="TreeGrafter"/>
</dbReference>
<dbReference type="GO" id="GO:0005730">
    <property type="term" value="C:nucleolus"/>
    <property type="evidence" value="ECO:0007669"/>
    <property type="project" value="UniProtKB-SubCell"/>
</dbReference>
<dbReference type="GO" id="GO:0030688">
    <property type="term" value="C:preribosome, small subunit precursor"/>
    <property type="evidence" value="ECO:0007669"/>
    <property type="project" value="TreeGrafter"/>
</dbReference>
<dbReference type="GO" id="GO:0003723">
    <property type="term" value="F:RNA binding"/>
    <property type="evidence" value="ECO:0007669"/>
    <property type="project" value="InterPro"/>
</dbReference>
<dbReference type="GO" id="GO:0000480">
    <property type="term" value="P:endonucleolytic cleavage in 5'-ETS of tricistronic rRNA transcript (SSU-rRNA, 5.8S rRNA, LSU-rRNA)"/>
    <property type="evidence" value="ECO:0007669"/>
    <property type="project" value="TreeGrafter"/>
</dbReference>
<dbReference type="GO" id="GO:0000447">
    <property type="term" value="P:endonucleolytic cleavage in ITS1 to separate SSU-rRNA from 5.8S rRNA and LSU-rRNA from tricistronic rRNA transcript (SSU-rRNA, 5.8S rRNA, LSU-rRNA)"/>
    <property type="evidence" value="ECO:0007669"/>
    <property type="project" value="TreeGrafter"/>
</dbReference>
<dbReference type="GO" id="GO:0000472">
    <property type="term" value="P:endonucleolytic cleavage to generate mature 5'-end of SSU-rRNA from (SSU-rRNA, 5.8S rRNA, LSU-rRNA)"/>
    <property type="evidence" value="ECO:0007669"/>
    <property type="project" value="TreeGrafter"/>
</dbReference>
<dbReference type="GO" id="GO:0000056">
    <property type="term" value="P:ribosomal small subunit export from nucleus"/>
    <property type="evidence" value="ECO:0007669"/>
    <property type="project" value="TreeGrafter"/>
</dbReference>
<dbReference type="Gene3D" id="1.25.10.10">
    <property type="entry name" value="Leucine-rich Repeat Variant"/>
    <property type="match status" value="2"/>
</dbReference>
<dbReference type="InterPro" id="IPR011989">
    <property type="entry name" value="ARM-like"/>
</dbReference>
<dbReference type="InterPro" id="IPR016024">
    <property type="entry name" value="ARM-type_fold"/>
</dbReference>
<dbReference type="InterPro" id="IPR040000">
    <property type="entry name" value="NOP9"/>
</dbReference>
<dbReference type="InterPro" id="IPR001313">
    <property type="entry name" value="Pumilio_RNA-bd_rpt"/>
</dbReference>
<dbReference type="PANTHER" id="PTHR13102">
    <property type="entry name" value="NUCLEOLAR PROTEIN 9"/>
    <property type="match status" value="1"/>
</dbReference>
<dbReference type="PANTHER" id="PTHR13102:SF0">
    <property type="entry name" value="NUCLEOLAR PROTEIN 9"/>
    <property type="match status" value="1"/>
</dbReference>
<dbReference type="Pfam" id="PF22493">
    <property type="entry name" value="PUF_NOP9"/>
    <property type="match status" value="1"/>
</dbReference>
<dbReference type="SMART" id="SM00025">
    <property type="entry name" value="Pumilio"/>
    <property type="match status" value="5"/>
</dbReference>
<dbReference type="SUPFAM" id="SSF48371">
    <property type="entry name" value="ARM repeat"/>
    <property type="match status" value="1"/>
</dbReference>
<accession>D1ZSG5</accession>
<accession>F7W6P4</accession>
<comment type="function">
    <text evidence="1">RNA-binding nucleolar protein required for pre-rRNA processing. Involved in production of 18S rRNA and assembly of small ribosomal subunit (By similarity).</text>
</comment>
<comment type="subcellular location">
    <subcellularLocation>
        <location evidence="1">Nucleus</location>
        <location evidence="1">Nucleolus</location>
    </subcellularLocation>
</comment>
<comment type="similarity">
    <text evidence="3">Belongs to the NOP9 family.</text>
</comment>
<organism>
    <name type="scientific">Sordaria macrospora (strain ATCC MYA-333 / DSM 997 / K(L3346) / K-hell)</name>
    <dbReference type="NCBI Taxonomy" id="771870"/>
    <lineage>
        <taxon>Eukaryota</taxon>
        <taxon>Fungi</taxon>
        <taxon>Dikarya</taxon>
        <taxon>Ascomycota</taxon>
        <taxon>Pezizomycotina</taxon>
        <taxon>Sordariomycetes</taxon>
        <taxon>Sordariomycetidae</taxon>
        <taxon>Sordariales</taxon>
        <taxon>Sordariaceae</taxon>
        <taxon>Sordaria</taxon>
    </lineage>
</organism>
<reference key="1">
    <citation type="journal article" date="2010" name="PLoS Genet.">
        <title>De novo assembly of a 40 Mb eukaryotic genome from short sequence reads: Sordaria macrospora, a model organism for fungal morphogenesis.</title>
        <authorList>
            <person name="Nowrousian M."/>
            <person name="Stajich J.E."/>
            <person name="Chu M."/>
            <person name="Engh I."/>
            <person name="Espagne E."/>
            <person name="Halliday K."/>
            <person name="Kamerewerd J."/>
            <person name="Kempken F."/>
            <person name="Knab B."/>
            <person name="Kuo H.-C."/>
            <person name="Osiewacz H.D."/>
            <person name="Poeggeler S."/>
            <person name="Read N.D."/>
            <person name="Seiler S."/>
            <person name="Smith K.M."/>
            <person name="Zickler D."/>
            <person name="Kueck U."/>
            <person name="Freitag M."/>
        </authorList>
    </citation>
    <scope>NUCLEOTIDE SEQUENCE [LARGE SCALE GENOMIC DNA]</scope>
    <source>
        <strain>ATCC MYA-333 / DSM 997 / K(L3346) / K-hell</strain>
    </source>
</reference>
<sequence>MGKNRKSKRQLVRDEKRAKKRGLEIEHEEERDIKKQRREEEAHQDAFAPVTDAGYVPPPLDGTYDENAFPGGPEEGRRNGPNTNFEREFFGMLAEQEQEYFRHADELLELNDFPSTEERDIFLQNVYKELRGKELKVASSQSCSRLMERLILLSNTRQKKSLFDAFGGHFISLVTHRFASHCCEKLFLQSAPVVTQELSGEYEQEPLPEGEEETEAMKSSMEDLFLLTLDELEEHLGYLLTDRFGSHAIRALLVILSGRPLDQAGTKSMLQSRKKEYITVEGAAANQSELSSQIRAVPSSFTMAIKKIIDDSTMTMDATALRVLAKHPTGNPTLQLLLELELTMFVKGKEKKEKNKQKKDDEEAEEKKEETQSEVTLLGMLVPDAPAAFADNTTQAAEFVNSMIYDPIGSRLLETLITHCPGKIFKGLQQHIFGPRIQSLLRNDIACYPAIKVLNRLSREDLADAVEKSLPEMASFVDKGRFNVIRTLFERCHIRNGTDEINALLKALTSAYGNDWKKLVPKLCMLDEDVVEEEQKPDPKFQTQEAKNKAFMLNHGCQLVAALLAIPGQPSKAIQASLAALKPAQVMKMATTSHNTSSILVKALQTPATNPTFHKVLVSSLLPHVYELATSQQGSAVLNEIISLPSKPAEPNAPAVPFHMKENIISQLANYESELRETWLGRNVWRTWKGDMWSHRRHDWVRWAKETDPETARVAAIPRKREEKEKEEAEKKPKGYLGKNFDPKKLKGFAAKKFEKKEAEA</sequence>
<keyword id="KW-0539">Nucleus</keyword>
<keyword id="KW-1185">Reference proteome</keyword>
<keyword id="KW-0677">Repeat</keyword>
<keyword id="KW-0690">Ribosome biogenesis</keyword>
<keyword id="KW-0698">rRNA processing</keyword>
<protein>
    <recommendedName>
        <fullName>Nucleolar protein 9</fullName>
    </recommendedName>
    <alternativeName>
        <fullName>Pumilio domain-containing protein NOP9</fullName>
    </alternativeName>
</protein>
<feature type="chain" id="PRO_0000407834" description="Nucleolar protein 9">
    <location>
        <begin position="1"/>
        <end position="761"/>
    </location>
</feature>
<feature type="repeat" description="Pumilio 1">
    <location>
        <begin position="129"/>
        <end position="164"/>
    </location>
</feature>
<feature type="repeat" description="Pumilio 2">
    <location>
        <begin position="165"/>
        <end position="200"/>
    </location>
</feature>
<feature type="repeat" description="Pumilio 3">
    <location>
        <begin position="231"/>
        <end position="271"/>
    </location>
</feature>
<feature type="repeat" description="Pumilio 4">
    <location>
        <begin position="395"/>
        <end position="430"/>
    </location>
</feature>
<feature type="repeat" description="Pumilio 5">
    <location>
        <begin position="432"/>
        <end position="467"/>
    </location>
</feature>
<feature type="repeat" description="Pumilio 6">
    <location>
        <begin position="620"/>
        <end position="666"/>
    </location>
</feature>
<feature type="region of interest" description="Disordered" evidence="2">
    <location>
        <begin position="1"/>
        <end position="56"/>
    </location>
</feature>
<feature type="region of interest" description="Disordered" evidence="2">
    <location>
        <begin position="350"/>
        <end position="372"/>
    </location>
</feature>
<feature type="region of interest" description="Disordered" evidence="2">
    <location>
        <begin position="712"/>
        <end position="739"/>
    </location>
</feature>
<feature type="compositionally biased region" description="Basic residues" evidence="2">
    <location>
        <begin position="1"/>
        <end position="10"/>
    </location>
</feature>
<feature type="compositionally biased region" description="Basic and acidic residues" evidence="2">
    <location>
        <begin position="11"/>
        <end position="44"/>
    </location>
</feature>
<feature type="compositionally biased region" description="Basic and acidic residues" evidence="2">
    <location>
        <begin position="350"/>
        <end position="371"/>
    </location>
</feature>
<feature type="compositionally biased region" description="Basic and acidic residues" evidence="2">
    <location>
        <begin position="719"/>
        <end position="733"/>
    </location>
</feature>
<proteinExistence type="inferred from homology"/>